<proteinExistence type="evidence at transcript level"/>
<name>ZC21C_MACFA</name>
<dbReference type="EMBL" id="AB052152">
    <property type="protein sequence ID" value="BAB19007.1"/>
    <property type="molecule type" value="mRNA"/>
</dbReference>
<dbReference type="EMBL" id="AB055292">
    <property type="protein sequence ID" value="BAB21917.1"/>
    <property type="molecule type" value="mRNA"/>
</dbReference>
<dbReference type="RefSeq" id="NP_001270371.1">
    <property type="nucleotide sequence ID" value="NM_001283442.1"/>
</dbReference>
<dbReference type="SMR" id="Q9BGW4"/>
<dbReference type="STRING" id="9541.ENSMFAP00000011205"/>
<dbReference type="eggNOG" id="KOG3940">
    <property type="taxonomic scope" value="Eukaryota"/>
</dbReference>
<dbReference type="Proteomes" id="UP000233100">
    <property type="component" value="Unplaced"/>
</dbReference>
<dbReference type="GO" id="GO:0008270">
    <property type="term" value="F:zinc ion binding"/>
    <property type="evidence" value="ECO:0007669"/>
    <property type="project" value="UniProtKB-KW"/>
</dbReference>
<dbReference type="InterPro" id="IPR049899">
    <property type="entry name" value="Znf_C2HC_C3H"/>
</dbReference>
<dbReference type="InterPro" id="IPR026104">
    <property type="entry name" value="ZNF_C2HC_dom_1C"/>
</dbReference>
<dbReference type="PANTHER" id="PTHR14649">
    <property type="entry name" value="ZINC FINGER C2HC DOMAIN-CONTAINING PROTEIN 1C"/>
    <property type="match status" value="1"/>
</dbReference>
<dbReference type="PANTHER" id="PTHR14649:SF1">
    <property type="entry name" value="ZINC FINGER C2HC DOMAIN-CONTAINING PROTEIN 1C"/>
    <property type="match status" value="1"/>
</dbReference>
<dbReference type="Pfam" id="PF13913">
    <property type="entry name" value="zf-C2HC_2"/>
    <property type="match status" value="2"/>
</dbReference>
<dbReference type="PROSITE" id="PS52027">
    <property type="entry name" value="ZF_C2HC_C3H"/>
    <property type="match status" value="2"/>
</dbReference>
<comment type="cofactor">
    <cofactor evidence="2">
        <name>Zn(2+)</name>
        <dbReference type="ChEBI" id="CHEBI:29105"/>
    </cofactor>
</comment>
<comment type="similarity">
    <text evidence="4">Belongs to the ZC2HC1 family.</text>
</comment>
<organism>
    <name type="scientific">Macaca fascicularis</name>
    <name type="common">Crab-eating macaque</name>
    <name type="synonym">Cynomolgus monkey</name>
    <dbReference type="NCBI Taxonomy" id="9541"/>
    <lineage>
        <taxon>Eukaryota</taxon>
        <taxon>Metazoa</taxon>
        <taxon>Chordata</taxon>
        <taxon>Craniata</taxon>
        <taxon>Vertebrata</taxon>
        <taxon>Euteleostomi</taxon>
        <taxon>Mammalia</taxon>
        <taxon>Eutheria</taxon>
        <taxon>Euarchontoglires</taxon>
        <taxon>Primates</taxon>
        <taxon>Haplorrhini</taxon>
        <taxon>Catarrhini</taxon>
        <taxon>Cercopithecidae</taxon>
        <taxon>Cercopithecinae</taxon>
        <taxon>Macaca</taxon>
    </lineage>
</organism>
<reference key="1">
    <citation type="journal article" date="2001" name="Gene">
        <title>Assignment of 118 novel cDNAs of cynomolgus monkey brain to human chromosomes.</title>
        <authorList>
            <person name="Osada N."/>
            <person name="Hida M."/>
            <person name="Kususda J."/>
            <person name="Tanuma R."/>
            <person name="Iseki K."/>
            <person name="Hirata M."/>
            <person name="Suto Y."/>
            <person name="Hirai M."/>
            <person name="Terao K."/>
            <person name="Suzuki Y."/>
            <person name="Sugano S."/>
            <person name="Hashimoto K."/>
        </authorList>
    </citation>
    <scope>NUCLEOTIDE SEQUENCE [LARGE SCALE MRNA]</scope>
    <source>
        <tissue>Parietal cortex</tissue>
    </source>
</reference>
<reference key="2">
    <citation type="journal article" date="2001" name="Gene">
        <authorList>
            <person name="Osada N."/>
            <person name="Hida M."/>
            <person name="Kusuda J."/>
            <person name="Tanuma R."/>
            <person name="Iseki K."/>
            <person name="Hirata M."/>
            <person name="Suto Y."/>
            <person name="Hirai M."/>
            <person name="Terao K."/>
            <person name="Suzuki Y."/>
            <person name="Sugano S."/>
            <person name="Hashimoto K."/>
            <person name="Kususda J."/>
        </authorList>
    </citation>
    <scope>ERRATUM OF PUBMED:11574149</scope>
</reference>
<reference key="3">
    <citation type="submission" date="2001-02" db="EMBL/GenBank/DDBJ databases">
        <title>Isolation of full-length cDNA clones from macaque brain cDNA libraries.</title>
        <authorList>
            <person name="Osada N."/>
            <person name="Hida M."/>
            <person name="Kusuda J."/>
            <person name="Tanuma R."/>
            <person name="Iseki K."/>
            <person name="Hirai M."/>
            <person name="Terao K."/>
            <person name="Suzuki Y."/>
            <person name="Sugano S."/>
            <person name="Hashimoto K."/>
        </authorList>
    </citation>
    <scope>NUCLEOTIDE SEQUENCE [LARGE SCALE MRNA]</scope>
    <source>
        <tissue>Frontal cortex</tissue>
    </source>
</reference>
<gene>
    <name type="primary">ZC2HC1C</name>
    <name type="synonym">FAM164C</name>
    <name type="ORF">QflA-12176</name>
    <name type="ORF">QnpA-20710</name>
</gene>
<keyword id="KW-0175">Coiled coil</keyword>
<keyword id="KW-0479">Metal-binding</keyword>
<keyword id="KW-1185">Reference proteome</keyword>
<keyword id="KW-0677">Repeat</keyword>
<keyword id="KW-0862">Zinc</keyword>
<keyword id="KW-0863">Zinc-finger</keyword>
<evidence type="ECO:0000255" key="1"/>
<evidence type="ECO:0000255" key="2">
    <source>
        <dbReference type="PROSITE-ProRule" id="PRU01371"/>
    </source>
</evidence>
<evidence type="ECO:0000256" key="3">
    <source>
        <dbReference type="SAM" id="MobiDB-lite"/>
    </source>
</evidence>
<evidence type="ECO:0000305" key="4"/>
<protein>
    <recommendedName>
        <fullName>Zinc finger C2HC domain-containing protein 1C</fullName>
    </recommendedName>
</protein>
<accession>Q9BGW4</accession>
<accession>Q9GKS7</accession>
<sequence length="531" mass="60644">MAGLQRLASHLPVGVMLPHNTTEAPGPHSAKQDSYEQSDSSQQSLKGHLRNNFQKQLLSNKELTLDKVHTHPKWNTKARSYSYPHCTGISHQDAGSDFQGQGNGLFYSSGPQSWYPKANNQDFIPFTKKRVGVDRAYPLKPVVHRKSCSTGESGTDGDQNVYPRPPELREFSSRNFDVRNQVNFSVVDPVLAAMQAEKALANLDRMEWVQIRRLEAAGESLEEEIRRKQILLRGKLKKTEEELRRIQTQKEQAKENENRELQKIIFPRSRVKGNNSNTTHKAVFSPEFDFEEEFSRDKREDETWERSQQNSSPFQLSDYRIQRLKRERLVASNNKIRDRVSEPSMEKFSPPSETPGGALQGSARNSSLSMAPDSSGSSGSTEEPQLGECSHCGRKFLLFRLERHSNICSRMQGSKRKVFDSSRARAKGTELEQYLNWKGPASAKAEPPRKNNWRQKHESFIHTLRQAREVQQVTAKGENRSHLPPILPAENPDYIQCPHCSHHFAPKVAEQHIPKCKTIKNRPPPPRKHYS</sequence>
<feature type="chain" id="PRO_0000089941" description="Zinc finger C2HC domain-containing protein 1C">
    <location>
        <begin position="1"/>
        <end position="531"/>
    </location>
</feature>
<feature type="zinc finger region" description="C2HC/C3H-type 1" evidence="2">
    <location>
        <begin position="385"/>
        <end position="414"/>
    </location>
</feature>
<feature type="zinc finger region" description="C2HC/C3H-type 2" evidence="2">
    <location>
        <begin position="493"/>
        <end position="522"/>
    </location>
</feature>
<feature type="region of interest" description="Disordered" evidence="3">
    <location>
        <begin position="16"/>
        <end position="45"/>
    </location>
</feature>
<feature type="region of interest" description="Disordered" evidence="3">
    <location>
        <begin position="290"/>
        <end position="318"/>
    </location>
</feature>
<feature type="region of interest" description="Disordered" evidence="3">
    <location>
        <begin position="334"/>
        <end position="387"/>
    </location>
</feature>
<feature type="coiled-coil region" evidence="1">
    <location>
        <begin position="209"/>
        <end position="264"/>
    </location>
</feature>
<feature type="compositionally biased region" description="Low complexity" evidence="3">
    <location>
        <begin position="35"/>
        <end position="44"/>
    </location>
</feature>
<feature type="compositionally biased region" description="Basic and acidic residues" evidence="3">
    <location>
        <begin position="293"/>
        <end position="305"/>
    </location>
</feature>
<feature type="compositionally biased region" description="Polar residues" evidence="3">
    <location>
        <begin position="306"/>
        <end position="315"/>
    </location>
</feature>
<feature type="compositionally biased region" description="Basic and acidic residues" evidence="3">
    <location>
        <begin position="335"/>
        <end position="345"/>
    </location>
</feature>
<feature type="compositionally biased region" description="Low complexity" evidence="3">
    <location>
        <begin position="366"/>
        <end position="380"/>
    </location>
</feature>
<feature type="binding site" evidence="2">
    <location>
        <position position="389"/>
    </location>
    <ligand>
        <name>Zn(2+)</name>
        <dbReference type="ChEBI" id="CHEBI:29105"/>
        <label>1</label>
    </ligand>
</feature>
<feature type="binding site" evidence="2">
    <location>
        <position position="392"/>
    </location>
    <ligand>
        <name>Zn(2+)</name>
        <dbReference type="ChEBI" id="CHEBI:29105"/>
        <label>1</label>
    </ligand>
</feature>
<feature type="binding site" evidence="2">
    <location>
        <position position="404"/>
    </location>
    <ligand>
        <name>Zn(2+)</name>
        <dbReference type="ChEBI" id="CHEBI:29105"/>
        <label>1</label>
    </ligand>
</feature>
<feature type="binding site" evidence="2">
    <location>
        <position position="408"/>
    </location>
    <ligand>
        <name>Zn(2+)</name>
        <dbReference type="ChEBI" id="CHEBI:29105"/>
        <label>1</label>
    </ligand>
</feature>
<feature type="binding site" evidence="2">
    <location>
        <position position="497"/>
    </location>
    <ligand>
        <name>Zn(2+)</name>
        <dbReference type="ChEBI" id="CHEBI:29105"/>
        <label>2</label>
    </ligand>
</feature>
<feature type="binding site" evidence="2">
    <location>
        <position position="500"/>
    </location>
    <ligand>
        <name>Zn(2+)</name>
        <dbReference type="ChEBI" id="CHEBI:29105"/>
        <label>2</label>
    </ligand>
</feature>
<feature type="binding site" evidence="2">
    <location>
        <position position="512"/>
    </location>
    <ligand>
        <name>Zn(2+)</name>
        <dbReference type="ChEBI" id="CHEBI:29105"/>
        <label>2</label>
    </ligand>
</feature>
<feature type="binding site" evidence="2">
    <location>
        <position position="516"/>
    </location>
    <ligand>
        <name>Zn(2+)</name>
        <dbReference type="ChEBI" id="CHEBI:29105"/>
        <label>2</label>
    </ligand>
</feature>
<feature type="sequence conflict" description="In Ref. 3; BAB21917." evidence="4" ref="3">
    <original>S</original>
    <variation>P</variation>
    <location>
        <position position="9"/>
    </location>
</feature>
<feature type="sequence conflict" description="In Ref. 3; BAB21917." evidence="4" ref="3">
    <original>K</original>
    <variation>R</variation>
    <location>
        <position position="298"/>
    </location>
</feature>
<feature type="sequence conflict" description="In Ref. 3; BAB21917." evidence="4" ref="3">
    <original>E</original>
    <variation>G</variation>
    <location>
        <position position="327"/>
    </location>
</feature>